<reference key="1">
    <citation type="journal article" date="2005" name="Proc. Natl. Acad. Sci. U.S.A.">
        <title>Comparison of the complete genome sequences of Pseudomonas syringae pv. syringae B728a and pv. tomato DC3000.</title>
        <authorList>
            <person name="Feil H."/>
            <person name="Feil W.S."/>
            <person name="Chain P."/>
            <person name="Larimer F."/>
            <person name="Dibartolo G."/>
            <person name="Copeland A."/>
            <person name="Lykidis A."/>
            <person name="Trong S."/>
            <person name="Nolan M."/>
            <person name="Goltsman E."/>
            <person name="Thiel J."/>
            <person name="Malfatti S."/>
            <person name="Loper J.E."/>
            <person name="Lapidus A."/>
            <person name="Detter J.C."/>
            <person name="Land M."/>
            <person name="Richardson P.M."/>
            <person name="Kyrpides N.C."/>
            <person name="Ivanova N."/>
            <person name="Lindow S.E."/>
        </authorList>
    </citation>
    <scope>NUCLEOTIDE SEQUENCE [LARGE SCALE GENOMIC DNA]</scope>
    <source>
        <strain>B728a</strain>
    </source>
</reference>
<comment type="function">
    <text evidence="1">Binds to the 23S rRNA.</text>
</comment>
<comment type="subunit">
    <text evidence="1">Part of the 50S ribosomal subunit.</text>
</comment>
<comment type="similarity">
    <text evidence="1">Belongs to the universal ribosomal protein uL15 family.</text>
</comment>
<sequence length="144" mass="15166">MKLNDLSPAPGSRREKHRPGRGIGSGLGKTGGRGHKGQSSRSGGTIAPGFEGGQQPLHRRLPKFGFVSLKAMDRAEVRLSELAKVEGDIVTVQSLKDANVINQNVQRVKIMLSGEVTRAVTIKGIAATKGARAAIEAAGGKFEE</sequence>
<gene>
    <name evidence="1" type="primary">rplO</name>
    <name type="ordered locus">Psyr_4529</name>
</gene>
<dbReference type="EMBL" id="CP000075">
    <property type="protein sequence ID" value="AAY39559.1"/>
    <property type="molecule type" value="Genomic_DNA"/>
</dbReference>
<dbReference type="RefSeq" id="WP_002555470.1">
    <property type="nucleotide sequence ID" value="NC_007005.1"/>
</dbReference>
<dbReference type="RefSeq" id="YP_237597.1">
    <property type="nucleotide sequence ID" value="NC_007005.1"/>
</dbReference>
<dbReference type="SMR" id="Q4ZMR3"/>
<dbReference type="STRING" id="205918.Psyr_4529"/>
<dbReference type="GeneID" id="96221011"/>
<dbReference type="KEGG" id="psb:Psyr_4529"/>
<dbReference type="PATRIC" id="fig|205918.7.peg.4668"/>
<dbReference type="eggNOG" id="COG0200">
    <property type="taxonomic scope" value="Bacteria"/>
</dbReference>
<dbReference type="HOGENOM" id="CLU_055188_4_2_6"/>
<dbReference type="OrthoDB" id="9810293at2"/>
<dbReference type="Proteomes" id="UP000000426">
    <property type="component" value="Chromosome"/>
</dbReference>
<dbReference type="GO" id="GO:0022625">
    <property type="term" value="C:cytosolic large ribosomal subunit"/>
    <property type="evidence" value="ECO:0007669"/>
    <property type="project" value="TreeGrafter"/>
</dbReference>
<dbReference type="GO" id="GO:0019843">
    <property type="term" value="F:rRNA binding"/>
    <property type="evidence" value="ECO:0007669"/>
    <property type="project" value="UniProtKB-UniRule"/>
</dbReference>
<dbReference type="GO" id="GO:0003735">
    <property type="term" value="F:structural constituent of ribosome"/>
    <property type="evidence" value="ECO:0007669"/>
    <property type="project" value="InterPro"/>
</dbReference>
<dbReference type="GO" id="GO:0006412">
    <property type="term" value="P:translation"/>
    <property type="evidence" value="ECO:0007669"/>
    <property type="project" value="UniProtKB-UniRule"/>
</dbReference>
<dbReference type="Gene3D" id="3.100.10.10">
    <property type="match status" value="1"/>
</dbReference>
<dbReference type="HAMAP" id="MF_01341">
    <property type="entry name" value="Ribosomal_uL15"/>
    <property type="match status" value="1"/>
</dbReference>
<dbReference type="InterPro" id="IPR030878">
    <property type="entry name" value="Ribosomal_uL15"/>
</dbReference>
<dbReference type="InterPro" id="IPR021131">
    <property type="entry name" value="Ribosomal_uL15/eL18"/>
</dbReference>
<dbReference type="InterPro" id="IPR036227">
    <property type="entry name" value="Ribosomal_uL15/eL18_sf"/>
</dbReference>
<dbReference type="InterPro" id="IPR005749">
    <property type="entry name" value="Ribosomal_uL15_bac-type"/>
</dbReference>
<dbReference type="InterPro" id="IPR001196">
    <property type="entry name" value="Ribosomal_uL15_CS"/>
</dbReference>
<dbReference type="NCBIfam" id="TIGR01071">
    <property type="entry name" value="rplO_bact"/>
    <property type="match status" value="1"/>
</dbReference>
<dbReference type="PANTHER" id="PTHR12934">
    <property type="entry name" value="50S RIBOSOMAL PROTEIN L15"/>
    <property type="match status" value="1"/>
</dbReference>
<dbReference type="PANTHER" id="PTHR12934:SF11">
    <property type="entry name" value="LARGE RIBOSOMAL SUBUNIT PROTEIN UL15M"/>
    <property type="match status" value="1"/>
</dbReference>
<dbReference type="Pfam" id="PF00828">
    <property type="entry name" value="Ribosomal_L27A"/>
    <property type="match status" value="1"/>
</dbReference>
<dbReference type="SUPFAM" id="SSF52080">
    <property type="entry name" value="Ribosomal proteins L15p and L18e"/>
    <property type="match status" value="1"/>
</dbReference>
<dbReference type="PROSITE" id="PS00475">
    <property type="entry name" value="RIBOSOMAL_L15"/>
    <property type="match status" value="1"/>
</dbReference>
<organism>
    <name type="scientific">Pseudomonas syringae pv. syringae (strain B728a)</name>
    <dbReference type="NCBI Taxonomy" id="205918"/>
    <lineage>
        <taxon>Bacteria</taxon>
        <taxon>Pseudomonadati</taxon>
        <taxon>Pseudomonadota</taxon>
        <taxon>Gammaproteobacteria</taxon>
        <taxon>Pseudomonadales</taxon>
        <taxon>Pseudomonadaceae</taxon>
        <taxon>Pseudomonas</taxon>
        <taxon>Pseudomonas syringae</taxon>
    </lineage>
</organism>
<name>RL15_PSEU2</name>
<proteinExistence type="inferred from homology"/>
<keyword id="KW-0687">Ribonucleoprotein</keyword>
<keyword id="KW-0689">Ribosomal protein</keyword>
<keyword id="KW-0694">RNA-binding</keyword>
<keyword id="KW-0699">rRNA-binding</keyword>
<feature type="chain" id="PRO_0000104786" description="Large ribosomal subunit protein uL15">
    <location>
        <begin position="1"/>
        <end position="144"/>
    </location>
</feature>
<feature type="region of interest" description="Disordered" evidence="2">
    <location>
        <begin position="1"/>
        <end position="57"/>
    </location>
</feature>
<feature type="compositionally biased region" description="Gly residues" evidence="2">
    <location>
        <begin position="21"/>
        <end position="31"/>
    </location>
</feature>
<protein>
    <recommendedName>
        <fullName evidence="1">Large ribosomal subunit protein uL15</fullName>
    </recommendedName>
    <alternativeName>
        <fullName evidence="3">50S ribosomal protein L15</fullName>
    </alternativeName>
</protein>
<accession>Q4ZMR3</accession>
<evidence type="ECO:0000255" key="1">
    <source>
        <dbReference type="HAMAP-Rule" id="MF_01341"/>
    </source>
</evidence>
<evidence type="ECO:0000256" key="2">
    <source>
        <dbReference type="SAM" id="MobiDB-lite"/>
    </source>
</evidence>
<evidence type="ECO:0000305" key="3"/>